<keyword id="KW-0067">ATP-binding</keyword>
<keyword id="KW-0963">Cytoplasm</keyword>
<keyword id="KW-0436">Ligase</keyword>
<keyword id="KW-0547">Nucleotide-binding</keyword>
<keyword id="KW-0819">tRNA processing</keyword>
<accession>C0MAT4</accession>
<organism>
    <name type="scientific">Streptococcus equi subsp. equi (strain 4047)</name>
    <dbReference type="NCBI Taxonomy" id="553482"/>
    <lineage>
        <taxon>Bacteria</taxon>
        <taxon>Bacillati</taxon>
        <taxon>Bacillota</taxon>
        <taxon>Bacilli</taxon>
        <taxon>Lactobacillales</taxon>
        <taxon>Streptococcaceae</taxon>
        <taxon>Streptococcus</taxon>
    </lineage>
</organism>
<gene>
    <name evidence="1" type="primary">tilS</name>
    <name type="ordered locus">SEQ_0013</name>
</gene>
<evidence type="ECO:0000255" key="1">
    <source>
        <dbReference type="HAMAP-Rule" id="MF_01161"/>
    </source>
</evidence>
<name>TILS_STRE4</name>
<dbReference type="EC" id="6.3.4.19" evidence="1"/>
<dbReference type="EMBL" id="FM204883">
    <property type="protein sequence ID" value="CAW91895.1"/>
    <property type="molecule type" value="Genomic_DNA"/>
</dbReference>
<dbReference type="RefSeq" id="WP_012678762.1">
    <property type="nucleotide sequence ID" value="NC_012471.1"/>
</dbReference>
<dbReference type="SMR" id="C0MAT4"/>
<dbReference type="KEGG" id="seu:SEQ_0013"/>
<dbReference type="HOGENOM" id="CLU_018869_0_2_9"/>
<dbReference type="OrthoDB" id="9807403at2"/>
<dbReference type="Proteomes" id="UP000001365">
    <property type="component" value="Chromosome"/>
</dbReference>
<dbReference type="GO" id="GO:0005737">
    <property type="term" value="C:cytoplasm"/>
    <property type="evidence" value="ECO:0007669"/>
    <property type="project" value="UniProtKB-SubCell"/>
</dbReference>
<dbReference type="GO" id="GO:0005524">
    <property type="term" value="F:ATP binding"/>
    <property type="evidence" value="ECO:0007669"/>
    <property type="project" value="UniProtKB-UniRule"/>
</dbReference>
<dbReference type="GO" id="GO:0032267">
    <property type="term" value="F:tRNA(Ile)-lysidine synthase activity"/>
    <property type="evidence" value="ECO:0007669"/>
    <property type="project" value="UniProtKB-EC"/>
</dbReference>
<dbReference type="GO" id="GO:0006400">
    <property type="term" value="P:tRNA modification"/>
    <property type="evidence" value="ECO:0007669"/>
    <property type="project" value="UniProtKB-UniRule"/>
</dbReference>
<dbReference type="CDD" id="cd01992">
    <property type="entry name" value="TilS_N"/>
    <property type="match status" value="1"/>
</dbReference>
<dbReference type="Gene3D" id="3.40.50.620">
    <property type="entry name" value="HUPs"/>
    <property type="match status" value="1"/>
</dbReference>
<dbReference type="HAMAP" id="MF_01161">
    <property type="entry name" value="tRNA_Ile_lys_synt"/>
    <property type="match status" value="1"/>
</dbReference>
<dbReference type="InterPro" id="IPR012796">
    <property type="entry name" value="Lysidine-tRNA-synth_C"/>
</dbReference>
<dbReference type="InterPro" id="IPR014729">
    <property type="entry name" value="Rossmann-like_a/b/a_fold"/>
</dbReference>
<dbReference type="InterPro" id="IPR011063">
    <property type="entry name" value="TilS/TtcA_N"/>
</dbReference>
<dbReference type="InterPro" id="IPR012094">
    <property type="entry name" value="tRNA_Ile_lys_synt"/>
</dbReference>
<dbReference type="InterPro" id="IPR012795">
    <property type="entry name" value="tRNA_Ile_lys_synt_N"/>
</dbReference>
<dbReference type="NCBIfam" id="TIGR02433">
    <property type="entry name" value="lysidine_TilS_C"/>
    <property type="match status" value="1"/>
</dbReference>
<dbReference type="NCBIfam" id="TIGR02432">
    <property type="entry name" value="lysidine_TilS_N"/>
    <property type="match status" value="1"/>
</dbReference>
<dbReference type="PANTHER" id="PTHR43033">
    <property type="entry name" value="TRNA(ILE)-LYSIDINE SYNTHASE-RELATED"/>
    <property type="match status" value="1"/>
</dbReference>
<dbReference type="PANTHER" id="PTHR43033:SF1">
    <property type="entry name" value="TRNA(ILE)-LYSIDINE SYNTHASE-RELATED"/>
    <property type="match status" value="1"/>
</dbReference>
<dbReference type="Pfam" id="PF01171">
    <property type="entry name" value="ATP_bind_3"/>
    <property type="match status" value="1"/>
</dbReference>
<dbReference type="SMART" id="SM00977">
    <property type="entry name" value="TilS_C"/>
    <property type="match status" value="1"/>
</dbReference>
<dbReference type="SUPFAM" id="SSF52402">
    <property type="entry name" value="Adenine nucleotide alpha hydrolases-like"/>
    <property type="match status" value="1"/>
</dbReference>
<comment type="function">
    <text evidence="1">Ligates lysine onto the cytidine present at position 34 of the AUA codon-specific tRNA(Ile) that contains the anticodon CAU, in an ATP-dependent manner. Cytidine is converted to lysidine, thus changing the amino acid specificity of the tRNA from methionine to isoleucine.</text>
</comment>
<comment type="catalytic activity">
    <reaction evidence="1">
        <text>cytidine(34) in tRNA(Ile2) + L-lysine + ATP = lysidine(34) in tRNA(Ile2) + AMP + diphosphate + H(+)</text>
        <dbReference type="Rhea" id="RHEA:43744"/>
        <dbReference type="Rhea" id="RHEA-COMP:10625"/>
        <dbReference type="Rhea" id="RHEA-COMP:10670"/>
        <dbReference type="ChEBI" id="CHEBI:15378"/>
        <dbReference type="ChEBI" id="CHEBI:30616"/>
        <dbReference type="ChEBI" id="CHEBI:32551"/>
        <dbReference type="ChEBI" id="CHEBI:33019"/>
        <dbReference type="ChEBI" id="CHEBI:82748"/>
        <dbReference type="ChEBI" id="CHEBI:83665"/>
        <dbReference type="ChEBI" id="CHEBI:456215"/>
        <dbReference type="EC" id="6.3.4.19"/>
    </reaction>
</comment>
<comment type="subcellular location">
    <subcellularLocation>
        <location evidence="1">Cytoplasm</location>
    </subcellularLocation>
</comment>
<comment type="domain">
    <text>The N-terminal region contains the highly conserved SGGXDS motif, predicted to be a P-loop motif involved in ATP binding.</text>
</comment>
<comment type="similarity">
    <text evidence="1">Belongs to the tRNA(Ile)-lysidine synthase family.</text>
</comment>
<sequence>MTYQHIYNIIKKKAYFDAHQAVLIAVSGGVDSMNLLHFLHAFQAKLQIRIGIAHVNHKQRPESDDEEAYLRSWAKKHAIPIYVAYFQGAFSENAARHLRYQFFEEIMQQEHYSALVTAHHADDQAETILMRLIRGSRLRHLAGIREVQPFANGQLIRPFLTVSKAELPNPFHFEDHSNDSMAYFRNRVRHHYLPDFKRENPQATQSLIDLSAESRLLLQAFDDLTKGLEFHRLNCFLAQSAAVQFFLLQHYLETFPQLAIKKSQFDDLLHIIRRQKQGIYPIKNTYCLLIEKESFAIKKIIPKTDLNREFKMVSYGDSLNYRGYRFVFSGSLTDKGHDIAIPLYSLSPVTLRHRQAGDRLFLGEFSKKLRRLFIDGKFTSEQRQNAIVGEQAGVIIFVLVGDETYLRKASKHDIMLAKLYIDKLEKR</sequence>
<feature type="chain" id="PRO_1000164333" description="tRNA(Ile)-lysidine synthase">
    <location>
        <begin position="1"/>
        <end position="427"/>
    </location>
</feature>
<feature type="binding site" evidence="1">
    <location>
        <begin position="27"/>
        <end position="32"/>
    </location>
    <ligand>
        <name>ATP</name>
        <dbReference type="ChEBI" id="CHEBI:30616"/>
    </ligand>
</feature>
<proteinExistence type="inferred from homology"/>
<reference key="1">
    <citation type="journal article" date="2009" name="PLoS Pathog.">
        <title>Genomic evidence for the evolution of Streptococcus equi: host restriction, increased virulence, and genetic exchange with human pathogens.</title>
        <authorList>
            <person name="Holden M.T.G."/>
            <person name="Heather Z."/>
            <person name="Paillot R."/>
            <person name="Steward K.F."/>
            <person name="Webb K."/>
            <person name="Ainslie F."/>
            <person name="Jourdan T."/>
            <person name="Bason N.C."/>
            <person name="Holroyd N.E."/>
            <person name="Mungall K."/>
            <person name="Quail M.A."/>
            <person name="Sanders M."/>
            <person name="Simmonds M."/>
            <person name="Willey D."/>
            <person name="Brooks K."/>
            <person name="Aanensen D.M."/>
            <person name="Spratt B.G."/>
            <person name="Jolley K.A."/>
            <person name="Maiden M.C.J."/>
            <person name="Kehoe M."/>
            <person name="Chanter N."/>
            <person name="Bentley S.D."/>
            <person name="Robinson C."/>
            <person name="Maskell D.J."/>
            <person name="Parkhill J."/>
            <person name="Waller A.S."/>
        </authorList>
    </citation>
    <scope>NUCLEOTIDE SEQUENCE [LARGE SCALE GENOMIC DNA]</scope>
    <source>
        <strain>4047</strain>
    </source>
</reference>
<protein>
    <recommendedName>
        <fullName evidence="1">tRNA(Ile)-lysidine synthase</fullName>
        <ecNumber evidence="1">6.3.4.19</ecNumber>
    </recommendedName>
    <alternativeName>
        <fullName evidence="1">tRNA(Ile)-2-lysyl-cytidine synthase</fullName>
    </alternativeName>
    <alternativeName>
        <fullName evidence="1">tRNA(Ile)-lysidine synthetase</fullName>
    </alternativeName>
</protein>